<feature type="signal peptide" evidence="1">
    <location>
        <begin position="1"/>
        <end position="28"/>
    </location>
</feature>
<feature type="chain" id="PRO_0000036218" description="UPF0164 protein TP_0858">
    <location>
        <begin position="29"/>
        <end position="396"/>
    </location>
</feature>
<accession>O83830</accession>
<sequence length="396" mass="42063">MGTMIRHTFTHRCGALLCALALGSSTMAATAAAKPKKGQMQKLRQRPVWAPTGGRYASLDGAFTALANDASFFEANPAGSANMTHGELAFFHTTGFGSFHAETLSYVGQSGNWGYGASMRMFFPESGFDFSTTTEPVCTPASNPIKQRGAIGIINFARRIGGLSLGANLKAGFRDAQGLQHTSVSSDIGLQWVGNVAKSFTSEEPNLYIGLAATNLGLTVKVSDKIENCTSTCEKCGCCKERCCCNGKKACCKDCDCNCPCQDCNDKGTVHATDTMLRAGFAYRPFSWFLFSLGATTSMNVQTLASSDAKSLYQNLAYSIGAMFDPFSFLSLSSSFRINHKANMRVGVGAEARIARIKLNAGYRCDVSDISSGSGCTGAKASHYLSLGGAILLGRN</sequence>
<keyword id="KW-1185">Reference proteome</keyword>
<keyword id="KW-0732">Signal</keyword>
<evidence type="ECO:0000255" key="1"/>
<evidence type="ECO:0000305" key="2"/>
<gene>
    <name type="ordered locus">TP_0858</name>
</gene>
<organism>
    <name type="scientific">Treponema pallidum (strain Nichols)</name>
    <dbReference type="NCBI Taxonomy" id="243276"/>
    <lineage>
        <taxon>Bacteria</taxon>
        <taxon>Pseudomonadati</taxon>
        <taxon>Spirochaetota</taxon>
        <taxon>Spirochaetia</taxon>
        <taxon>Spirochaetales</taxon>
        <taxon>Treponemataceae</taxon>
        <taxon>Treponema</taxon>
    </lineage>
</organism>
<protein>
    <recommendedName>
        <fullName>UPF0164 protein TP_0858</fullName>
    </recommendedName>
</protein>
<proteinExistence type="inferred from homology"/>
<comment type="similarity">
    <text evidence="2">Belongs to the UPF0164 family.</text>
</comment>
<comment type="sequence caution" evidence="2">
    <conflict type="erroneous initiation">
        <sequence resource="EMBL-CDS" id="AAC65829"/>
    </conflict>
</comment>
<name>Y858_TREPA</name>
<reference key="1">
    <citation type="journal article" date="1998" name="Science">
        <title>Complete genome sequence of Treponema pallidum, the syphilis spirochete.</title>
        <authorList>
            <person name="Fraser C.M."/>
            <person name="Norris S.J."/>
            <person name="Weinstock G.M."/>
            <person name="White O."/>
            <person name="Sutton G.G."/>
            <person name="Dodson R.J."/>
            <person name="Gwinn M.L."/>
            <person name="Hickey E.K."/>
            <person name="Clayton R.A."/>
            <person name="Ketchum K.A."/>
            <person name="Sodergren E."/>
            <person name="Hardham J.M."/>
            <person name="McLeod M.P."/>
            <person name="Salzberg S.L."/>
            <person name="Peterson J.D."/>
            <person name="Khalak H.G."/>
            <person name="Richardson D.L."/>
            <person name="Howell J.K."/>
            <person name="Chidambaram M."/>
            <person name="Utterback T.R."/>
            <person name="McDonald L.A."/>
            <person name="Artiach P."/>
            <person name="Bowman C."/>
            <person name="Cotton M.D."/>
            <person name="Fujii C."/>
            <person name="Garland S.A."/>
            <person name="Hatch B."/>
            <person name="Horst K."/>
            <person name="Roberts K.M."/>
            <person name="Sandusky M."/>
            <person name="Weidman J.F."/>
            <person name="Smith H.O."/>
            <person name="Venter J.C."/>
        </authorList>
    </citation>
    <scope>NUCLEOTIDE SEQUENCE [LARGE SCALE GENOMIC DNA]</scope>
    <source>
        <strain>Nichols</strain>
    </source>
</reference>
<dbReference type="EMBL" id="AE000520">
    <property type="protein sequence ID" value="AAC65829.1"/>
    <property type="status" value="ALT_INIT"/>
    <property type="molecule type" value="Genomic_DNA"/>
</dbReference>
<dbReference type="PIR" id="B71272">
    <property type="entry name" value="B71272"/>
</dbReference>
<dbReference type="IntAct" id="O83830">
    <property type="interactions" value="2"/>
</dbReference>
<dbReference type="STRING" id="243276.TP_0858"/>
<dbReference type="EnsemblBacteria" id="AAC65829">
    <property type="protein sequence ID" value="AAC65829"/>
    <property type="gene ID" value="TP_0858"/>
</dbReference>
<dbReference type="KEGG" id="tpa:TP_0858"/>
<dbReference type="HOGENOM" id="CLU_060535_0_0_12"/>
<dbReference type="Proteomes" id="UP000000811">
    <property type="component" value="Chromosome"/>
</dbReference>
<dbReference type="Gene3D" id="2.40.160.60">
    <property type="entry name" value="Outer membrane protein transport protein (OMPP1/FadL/TodX)"/>
    <property type="match status" value="1"/>
</dbReference>
<dbReference type="InterPro" id="IPR005362">
    <property type="entry name" value="UPF0164"/>
</dbReference>
<dbReference type="Pfam" id="PF03687">
    <property type="entry name" value="UPF0164"/>
    <property type="match status" value="1"/>
</dbReference>